<protein>
    <recommendedName>
        <fullName evidence="9">Chitin synthase V</fullName>
        <ecNumber evidence="11">2.4.1.16</ecNumber>
    </recommendedName>
    <alternativeName>
        <fullName evidence="10">Chitin-UDP acetyl-glucosaminyl transferase AV</fullName>
    </alternativeName>
    <alternativeName>
        <fullName evidence="9">Class-V chitin synthase V</fullName>
    </alternativeName>
</protein>
<feature type="chain" id="PRO_0000460864" description="Chitin synthase V">
    <location>
        <begin position="1"/>
        <end position="1850"/>
    </location>
</feature>
<feature type="transmembrane region" description="Helical" evidence="2">
    <location>
        <begin position="884"/>
        <end position="904"/>
    </location>
</feature>
<feature type="transmembrane region" description="Helical" evidence="2">
    <location>
        <begin position="923"/>
        <end position="943"/>
    </location>
</feature>
<feature type="transmembrane region" description="Helical" evidence="2">
    <location>
        <begin position="1196"/>
        <end position="1216"/>
    </location>
</feature>
<feature type="transmembrane region" description="Helical" evidence="2">
    <location>
        <begin position="1568"/>
        <end position="1588"/>
    </location>
</feature>
<feature type="transmembrane region" description="Helical" evidence="2">
    <location>
        <begin position="1590"/>
        <end position="1610"/>
    </location>
</feature>
<feature type="transmembrane region" description="Helical" evidence="2">
    <location>
        <begin position="1617"/>
        <end position="1637"/>
    </location>
</feature>
<feature type="transmembrane region" description="Helical" evidence="2">
    <location>
        <begin position="1644"/>
        <end position="1664"/>
    </location>
</feature>
<feature type="domain" description="Myosin motor" evidence="5">
    <location>
        <begin position="1"/>
        <end position="779"/>
    </location>
</feature>
<feature type="domain" description="Cytochrome b5 heme-binding" evidence="3">
    <location>
        <begin position="947"/>
        <end position="1006"/>
    </location>
</feature>
<feature type="domain" description="DEK-C" evidence="6">
    <location>
        <begin position="1800"/>
        <end position="1850"/>
    </location>
</feature>
<feature type="region of interest" description="Disordered" evidence="7">
    <location>
        <begin position="1"/>
        <end position="27"/>
    </location>
</feature>
<feature type="region of interest" description="Disordered" evidence="7">
    <location>
        <begin position="289"/>
        <end position="309"/>
    </location>
</feature>
<feature type="region of interest" description="Disordered" evidence="7">
    <location>
        <begin position="593"/>
        <end position="647"/>
    </location>
</feature>
<feature type="region of interest" description="Actin-binding" evidence="5">
    <location>
        <begin position="656"/>
        <end position="680"/>
    </location>
</feature>
<feature type="compositionally biased region" description="Polar residues" evidence="7">
    <location>
        <begin position="620"/>
        <end position="630"/>
    </location>
</feature>
<feature type="binding site" evidence="5">
    <location>
        <begin position="105"/>
        <end position="112"/>
    </location>
    <ligand>
        <name>ATP</name>
        <dbReference type="ChEBI" id="CHEBI:30616"/>
    </ligand>
</feature>
<feature type="glycosylation site" description="N-linked (GlcNAc...) asparagine" evidence="4">
    <location>
        <position position="245"/>
    </location>
</feature>
<feature type="glycosylation site" description="N-linked (GlcNAc...) asparagine" evidence="4">
    <location>
        <position position="290"/>
    </location>
</feature>
<feature type="glycosylation site" description="N-linked (GlcNAc...) asparagine" evidence="4">
    <location>
        <position position="427"/>
    </location>
</feature>
<feature type="glycosylation site" description="N-linked (GlcNAc...) asparagine" evidence="4">
    <location>
        <position position="481"/>
    </location>
</feature>
<feature type="glycosylation site" description="N-linked (GlcNAc...) asparagine" evidence="4">
    <location>
        <position position="558"/>
    </location>
</feature>
<feature type="glycosylation site" description="N-linked (GlcNAc...) asparagine" evidence="4">
    <location>
        <position position="1033"/>
    </location>
</feature>
<feature type="glycosylation site" description="N-linked (GlcNAc...) asparagine" evidence="4">
    <location>
        <position position="1058"/>
    </location>
</feature>
<feature type="glycosylation site" description="N-linked (GlcNAc...) asparagine" evidence="4">
    <location>
        <position position="1186"/>
    </location>
</feature>
<feature type="glycosylation site" description="N-linked (GlcNAc...) asparagine" evidence="4">
    <location>
        <position position="1453"/>
    </location>
</feature>
<feature type="glycosylation site" description="N-linked (GlcNAc...) asparagine" evidence="4">
    <location>
        <position position="1559"/>
    </location>
</feature>
<feature type="glycosylation site" description="N-linked (GlcNAc...) asparagine" evidence="4">
    <location>
        <position position="1767"/>
    </location>
</feature>
<sequence length="1850" mass="204991">MASTLPPLGGGNGGPHTQHSLPSLPAHLQSDTHITGHLASRFHVSHPTAKLSSHALVCLNTYTSSSKGPDGGKPGSAMAGAEDMADRAWIRLGHRSENQAVVFLGESGSGKSTIRSHLLTALLDKSSTPLSNKLSLAAYVFDSLTTTKTATTPTASKSGLFYELQYDTSATTNPILIGGKLLDHRLERSRIADVPTGERNFHVLYYLLAGTSQAEKTHLGLDDGASGSRRWKYLGHPTQLKVGINDSEGFQLFKTALKKLEFPRSDIAEICQILAAILHIGQLEFESTNNTSATGDDSGGFSHEGGQTSTTVRNKDVLGIIAAFLGVSMADLQSTLGYKTKMIQKERVTVMLDPAGARAHANELARTLYSLLVAWILESVNQRICAPEEDIANTISIVDFPGFAQQTATGSTLDQLLNNAATEAIYNFTLYNFFDRKAEMLESEEVSVAPTSYFDNSDAVKGLLKPGNGLLSILDDQTRRNKTDMQFLESLRKRFEGKNPAIEVGSATAKLPGSNFYTENAAASFTVRHFAGEVEYPVKGLIEENGEVVSVDLLNMFNSTKSEFVGRLFGQDVLQTVNHPIEKSTVMQATISSKPMRAPSVMSRKGGRGRGIASQRRQQESNLFDSGNTHAESRSPKGGNKGGIDQGASGQFLSSLDNVQKAVTDPGTNAYFVFCLKPNDRRIANQFDSKCVRTQVQTFGIAEISQRLRSADFSLFLPFGEFLGMADAETILVGSERERAEMVIEEKRWPSNEVQIGSTGVFLSERCWMEIAGLVDGSAAQGRFALPSSDGYGNDGATPGERDAFGASKEQLLSGGNTPLMYGEKGKPGYFGSDDARSEAGASAIGGGDMFKNFDTREQMAERGNEKNLEEIEEFKDSPSRKRWVFTVYFLTWFIPDFLIRWIGRMPRKDVRMAWREKLAINMLIWFMCLVAAFFIVVFPMLICPKQNVFSAAELSSHNGKDGNSAYVSIRGHVIDLGSFADRHYPSFVSRKTMLNYAGMDVSSLFPVQVSALCQGTDGSVDQTVTLDYKNTNMTGSPALINSQDLNAQYHDFRYFTNDTRPDWYLEQLIMLKGNYGKGTIGYSPEYIAKLGAKRQVIASIGSRVYDLTTYTVGGRRLRTKPGESLPSDPKLADFMDRKVVELFQNQAGGDITKFWNSLALAPDVKARMQTCLDHLFYVGDVDTRNSTRCKFAEYLVLAVSILLVSVIAFKFFAALQFGGKNVPENLDKFVMCQIPAYTEDEDSLRRAIDSAARMRYDDKRKLLVIICDGMIIGQGNDRPTPRIVLDILGVSETVDPEPLSFESLGEGLKQHNMGKVYSGLYEVQGHIVPFLVIVKVGKPSEVARPGNRGKRDSQMILMRFLNRVHYNLAMSPLELEMYHQIRNIIGVNPTFYEFMLQIDADTVVAPDSATRMVSAFLDDTRLIAVCGETALTNAKSSFITMIQVYEYYISHNLSKAFESLFGSVTCLPGCFSMYRIRAAETGKPLFVSREVVDSYATIRVDTLHMKNLLHLGEDRYLTTLLLKYHSKYKTKYLFSAHAWTIAPDSWKVFLSQRRRWINSTVHNLIELIPMAQLCGFCCFSMRFVVFIDLLSTVVQPVTIAYIVYLIVLVATKTTVVPITAFILLGAIYGLQAIIFILRRKWEMVGWMILYVMAVPVFSFGLPLYAFWHMDDFNWGTTRVVAGEKGKKVVISDEGKFDPSSIPRKKWEEYQAELWETQTSRDDSRSEISGISYGTKAQAVVSEYGFPSRPDSTTGFAAHALPYDSRNNSRMSLAHSDMGHHRMSQFGGSQFFNPDDMVGLPSDDALLAEIRDILKTADLMTVTKKGIKQELERRFDVPLDAKRAYINSGK</sequence>
<organism>
    <name type="scientific">Metarhizium acridum (strain CQMa 102)</name>
    <dbReference type="NCBI Taxonomy" id="655827"/>
    <lineage>
        <taxon>Eukaryota</taxon>
        <taxon>Fungi</taxon>
        <taxon>Dikarya</taxon>
        <taxon>Ascomycota</taxon>
        <taxon>Pezizomycotina</taxon>
        <taxon>Sordariomycetes</taxon>
        <taxon>Hypocreomycetidae</taxon>
        <taxon>Hypocreales</taxon>
        <taxon>Clavicipitaceae</taxon>
        <taxon>Metarhizium</taxon>
    </lineage>
</organism>
<reference key="1">
    <citation type="journal article" date="2011" name="PLoS Genet.">
        <title>Genome sequencing and comparative transcriptomics of the model entomopathogenic fungi Metarhizium anisopliae and M. acridum.</title>
        <authorList>
            <person name="Gao Q."/>
            <person name="Jin K."/>
            <person name="Ying S.-H."/>
            <person name="Zhang Y."/>
            <person name="Xiao G."/>
            <person name="Shang Y."/>
            <person name="Duan Z."/>
            <person name="Hu X."/>
            <person name="Xie X.-Q."/>
            <person name="Zhou G."/>
            <person name="Peng G."/>
            <person name="Luo Z."/>
            <person name="Huang W."/>
            <person name="Wang B."/>
            <person name="Fang W."/>
            <person name="Wang S."/>
            <person name="Zhong Y."/>
            <person name="Ma L.-J."/>
            <person name="St Leger R.J."/>
            <person name="Zhao G.-P."/>
            <person name="Pei Y."/>
            <person name="Feng M.-G."/>
            <person name="Xia Y."/>
            <person name="Wang C."/>
        </authorList>
    </citation>
    <scope>NUCLEOTIDE SEQUENCE [LARGE SCALE GENOMIC DNA]</scope>
    <source>
        <strain>CQMa 102</strain>
    </source>
</reference>
<reference key="2">
    <citation type="journal article" date="2019" name="PLoS Pathog.">
        <title>Members of chitin synthase family in Metarhizium acridum differentially affect fungal growth, stress tolerances, cell wall integrity and virulence.</title>
        <authorList>
            <person name="Zhang J."/>
            <person name="Jiang H."/>
            <person name="Du Y."/>
            <person name="Keyhani N.O."/>
            <person name="Xia Y."/>
            <person name="Jin K."/>
        </authorList>
    </citation>
    <scope>FUNCTION</scope>
    <scope>DISRUPTION PHENOTYPE</scope>
    <scope>TISSUE SPECIFICITY</scope>
</reference>
<dbReference type="EC" id="2.4.1.16" evidence="11"/>
<dbReference type="EMBL" id="GL698581">
    <property type="protein sequence ID" value="EFY85339.1"/>
    <property type="molecule type" value="Genomic_DNA"/>
</dbReference>
<dbReference type="RefSeq" id="XP_007814979.1">
    <property type="nucleotide sequence ID" value="XM_007816788.1"/>
</dbReference>
<dbReference type="SMR" id="E9EFJ1"/>
<dbReference type="STRING" id="655827.E9EFJ1"/>
<dbReference type="GeneID" id="19252950"/>
<dbReference type="KEGG" id="maw:19252950"/>
<dbReference type="eggNOG" id="KOG2571">
    <property type="taxonomic scope" value="Eukaryota"/>
</dbReference>
<dbReference type="eggNOG" id="KOG4229">
    <property type="taxonomic scope" value="Eukaryota"/>
</dbReference>
<dbReference type="HOGENOM" id="CLU_000192_0_2_1"/>
<dbReference type="InParanoid" id="E9EFJ1"/>
<dbReference type="OMA" id="LEMHHQI"/>
<dbReference type="OrthoDB" id="370884at2759"/>
<dbReference type="PHI-base" id="PHI:9492"/>
<dbReference type="Proteomes" id="UP000002499">
    <property type="component" value="Unassembled WGS sequence"/>
</dbReference>
<dbReference type="GO" id="GO:0030428">
    <property type="term" value="C:cell septum"/>
    <property type="evidence" value="ECO:0007669"/>
    <property type="project" value="UniProtKB-SubCell"/>
</dbReference>
<dbReference type="GO" id="GO:0051286">
    <property type="term" value="C:cell tip"/>
    <property type="evidence" value="ECO:0007669"/>
    <property type="project" value="UniProtKB-SubCell"/>
</dbReference>
<dbReference type="GO" id="GO:0016459">
    <property type="term" value="C:myosin complex"/>
    <property type="evidence" value="ECO:0007669"/>
    <property type="project" value="UniProtKB-KW"/>
</dbReference>
<dbReference type="GO" id="GO:0005886">
    <property type="term" value="C:plasma membrane"/>
    <property type="evidence" value="ECO:0007669"/>
    <property type="project" value="UniProtKB-SubCell"/>
</dbReference>
<dbReference type="GO" id="GO:0003779">
    <property type="term" value="F:actin binding"/>
    <property type="evidence" value="ECO:0007669"/>
    <property type="project" value="UniProtKB-KW"/>
</dbReference>
<dbReference type="GO" id="GO:0005524">
    <property type="term" value="F:ATP binding"/>
    <property type="evidence" value="ECO:0007669"/>
    <property type="project" value="UniProtKB-KW"/>
</dbReference>
<dbReference type="GO" id="GO:0004100">
    <property type="term" value="F:chitin synthase activity"/>
    <property type="evidence" value="ECO:0007669"/>
    <property type="project" value="UniProtKB-EC"/>
</dbReference>
<dbReference type="GO" id="GO:0003774">
    <property type="term" value="F:cytoskeletal motor activity"/>
    <property type="evidence" value="ECO:0007669"/>
    <property type="project" value="InterPro"/>
</dbReference>
<dbReference type="GO" id="GO:0006031">
    <property type="term" value="P:chitin biosynthetic process"/>
    <property type="evidence" value="ECO:0007669"/>
    <property type="project" value="TreeGrafter"/>
</dbReference>
<dbReference type="GO" id="GO:0031505">
    <property type="term" value="P:fungal-type cell wall organization"/>
    <property type="evidence" value="ECO:0007669"/>
    <property type="project" value="TreeGrafter"/>
</dbReference>
<dbReference type="CDD" id="cd14879">
    <property type="entry name" value="MYSc_Myo17"/>
    <property type="match status" value="1"/>
</dbReference>
<dbReference type="FunFam" id="1.10.10.820:FF:000012">
    <property type="entry name" value="Chitin synthase ChsE"/>
    <property type="match status" value="1"/>
</dbReference>
<dbReference type="FunFam" id="1.20.58.530:FF:000017">
    <property type="entry name" value="Chitin synthase ChsE"/>
    <property type="match status" value="1"/>
</dbReference>
<dbReference type="FunFam" id="3.40.850.10:FF:000055">
    <property type="entry name" value="Chitin synthase ChsE"/>
    <property type="match status" value="1"/>
</dbReference>
<dbReference type="Gene3D" id="1.10.10.820">
    <property type="match status" value="1"/>
</dbReference>
<dbReference type="Gene3D" id="1.20.58.530">
    <property type="match status" value="1"/>
</dbReference>
<dbReference type="Gene3D" id="3.10.120.10">
    <property type="entry name" value="Cytochrome b5-like heme/steroid binding domain"/>
    <property type="match status" value="1"/>
</dbReference>
<dbReference type="Gene3D" id="1.10.10.60">
    <property type="entry name" value="Homeodomain-like"/>
    <property type="match status" value="1"/>
</dbReference>
<dbReference type="Gene3D" id="3.40.850.10">
    <property type="entry name" value="Kinesin motor domain"/>
    <property type="match status" value="1"/>
</dbReference>
<dbReference type="Gene3D" id="1.20.120.720">
    <property type="entry name" value="Myosin VI head, motor domain, U50 subdomain"/>
    <property type="match status" value="1"/>
</dbReference>
<dbReference type="Gene3D" id="3.90.550.10">
    <property type="entry name" value="Spore Coat Polysaccharide Biosynthesis Protein SpsA, Chain A"/>
    <property type="match status" value="1"/>
</dbReference>
<dbReference type="InterPro" id="IPR004835">
    <property type="entry name" value="Chitin_synth"/>
</dbReference>
<dbReference type="InterPro" id="IPR001199">
    <property type="entry name" value="Cyt_B5-like_heme/steroid-bd"/>
</dbReference>
<dbReference type="InterPro" id="IPR036400">
    <property type="entry name" value="Cyt_B5-like_heme/steroid_sf"/>
</dbReference>
<dbReference type="InterPro" id="IPR014876">
    <property type="entry name" value="DEK_C"/>
</dbReference>
<dbReference type="InterPro" id="IPR036961">
    <property type="entry name" value="Kinesin_motor_dom_sf"/>
</dbReference>
<dbReference type="InterPro" id="IPR001609">
    <property type="entry name" value="Myosin_head_motor_dom-like"/>
</dbReference>
<dbReference type="InterPro" id="IPR036037">
    <property type="entry name" value="MYSc_Myo17"/>
</dbReference>
<dbReference type="InterPro" id="IPR029044">
    <property type="entry name" value="Nucleotide-diphossugar_trans"/>
</dbReference>
<dbReference type="InterPro" id="IPR027417">
    <property type="entry name" value="P-loop_NTPase"/>
</dbReference>
<dbReference type="PANTHER" id="PTHR22914">
    <property type="entry name" value="CHITIN SYNTHASE"/>
    <property type="match status" value="1"/>
</dbReference>
<dbReference type="PANTHER" id="PTHR22914:SF45">
    <property type="entry name" value="CHITIN SYNTHASE"/>
    <property type="match status" value="1"/>
</dbReference>
<dbReference type="Pfam" id="PF03142">
    <property type="entry name" value="Chitin_synth_2"/>
    <property type="match status" value="1"/>
</dbReference>
<dbReference type="Pfam" id="PF00173">
    <property type="entry name" value="Cyt-b5"/>
    <property type="match status" value="1"/>
</dbReference>
<dbReference type="Pfam" id="PF08766">
    <property type="entry name" value="DEK_C"/>
    <property type="match status" value="1"/>
</dbReference>
<dbReference type="Pfam" id="PF00063">
    <property type="entry name" value="Myosin_head"/>
    <property type="match status" value="1"/>
</dbReference>
<dbReference type="SMART" id="SM01117">
    <property type="entry name" value="Cyt-b5"/>
    <property type="match status" value="2"/>
</dbReference>
<dbReference type="SMART" id="SM00242">
    <property type="entry name" value="MYSc"/>
    <property type="match status" value="1"/>
</dbReference>
<dbReference type="SUPFAM" id="SSF55856">
    <property type="entry name" value="Cytochrome b5-like heme/steroid binding domain"/>
    <property type="match status" value="1"/>
</dbReference>
<dbReference type="SUPFAM" id="SSF109715">
    <property type="entry name" value="DEK C-terminal domain"/>
    <property type="match status" value="1"/>
</dbReference>
<dbReference type="SUPFAM" id="SSF53448">
    <property type="entry name" value="Nucleotide-diphospho-sugar transferases"/>
    <property type="match status" value="1"/>
</dbReference>
<dbReference type="SUPFAM" id="SSF52540">
    <property type="entry name" value="P-loop containing nucleoside triphosphate hydrolases"/>
    <property type="match status" value="1"/>
</dbReference>
<dbReference type="PROSITE" id="PS50255">
    <property type="entry name" value="CYTOCHROME_B5_2"/>
    <property type="match status" value="1"/>
</dbReference>
<dbReference type="PROSITE" id="PS51998">
    <property type="entry name" value="DEK_C"/>
    <property type="match status" value="1"/>
</dbReference>
<dbReference type="PROSITE" id="PS51456">
    <property type="entry name" value="MYOSIN_MOTOR"/>
    <property type="match status" value="1"/>
</dbReference>
<name>CHS5_METAQ</name>
<proteinExistence type="evidence at transcript level"/>
<accession>E9EFJ1</accession>
<keyword id="KW-0009">Actin-binding</keyword>
<keyword id="KW-0067">ATP-binding</keyword>
<keyword id="KW-1003">Cell membrane</keyword>
<keyword id="KW-0325">Glycoprotein</keyword>
<keyword id="KW-0328">Glycosyltransferase</keyword>
<keyword id="KW-0472">Membrane</keyword>
<keyword id="KW-0505">Motor protein</keyword>
<keyword id="KW-0518">Myosin</keyword>
<keyword id="KW-0547">Nucleotide-binding</keyword>
<keyword id="KW-1185">Reference proteome</keyword>
<keyword id="KW-0808">Transferase</keyword>
<keyword id="KW-0812">Transmembrane</keyword>
<keyword id="KW-1133">Transmembrane helix</keyword>
<keyword id="KW-0843">Virulence</keyword>
<evidence type="ECO:0000250" key="1">
    <source>
        <dbReference type="UniProtKB" id="G5EB74"/>
    </source>
</evidence>
<evidence type="ECO:0000255" key="2"/>
<evidence type="ECO:0000255" key="3">
    <source>
        <dbReference type="PROSITE-ProRule" id="PRU00279"/>
    </source>
</evidence>
<evidence type="ECO:0000255" key="4">
    <source>
        <dbReference type="PROSITE-ProRule" id="PRU00498"/>
    </source>
</evidence>
<evidence type="ECO:0000255" key="5">
    <source>
        <dbReference type="PROSITE-ProRule" id="PRU00782"/>
    </source>
</evidence>
<evidence type="ECO:0000255" key="6">
    <source>
        <dbReference type="PROSITE-ProRule" id="PRU01342"/>
    </source>
</evidence>
<evidence type="ECO:0000256" key="7">
    <source>
        <dbReference type="SAM" id="MobiDB-lite"/>
    </source>
</evidence>
<evidence type="ECO:0000269" key="8">
    <source>
    </source>
</evidence>
<evidence type="ECO:0000303" key="9">
    <source>
    </source>
</evidence>
<evidence type="ECO:0000305" key="10"/>
<evidence type="ECO:0000305" key="11">
    <source>
    </source>
</evidence>
<comment type="function">
    <text evidence="8 11">Polymerizes chitin, a structural polymer of the cell wall and septum, by transferring the sugar moiety of UDP-GlcNAc to the non-reducing end of the growing chitin polymer (Probable). Contributes to the production of conidia and the ability of fungal conidia to germinate (PubMed:31461507). Involved in the fungal cell wall integrity and the ability of conidia to withstand biophysical pressure (PubMed:31461507). Required for appressorium formation and evasion of insect cellular and/or humoral defenses, promoting the fungal dimorphic transition to the production of hyphal bodies that occurs within hosts, and ultimately to virulence (PubMed:31461507).</text>
</comment>
<comment type="catalytic activity">
    <reaction evidence="11">
        <text>[(1-&gt;4)-N-acetyl-beta-D-glucosaminyl](n) + UDP-N-acetyl-alpha-D-glucosamine = [(1-&gt;4)-N-acetyl-beta-D-glucosaminyl](n+1) + UDP + H(+)</text>
        <dbReference type="Rhea" id="RHEA:16637"/>
        <dbReference type="Rhea" id="RHEA-COMP:9593"/>
        <dbReference type="Rhea" id="RHEA-COMP:9595"/>
        <dbReference type="ChEBI" id="CHEBI:15378"/>
        <dbReference type="ChEBI" id="CHEBI:17029"/>
        <dbReference type="ChEBI" id="CHEBI:57705"/>
        <dbReference type="ChEBI" id="CHEBI:58223"/>
        <dbReference type="EC" id="2.4.1.16"/>
    </reaction>
    <physiologicalReaction direction="left-to-right" evidence="11">
        <dbReference type="Rhea" id="RHEA:16638"/>
    </physiologicalReaction>
</comment>
<comment type="subcellular location">
    <subcellularLocation>
        <location evidence="10">Cell membrane</location>
        <topology evidence="2">Multi-pass membrane protein</topology>
    </subcellularLocation>
    <subcellularLocation>
        <location evidence="1">Cell septum</location>
    </subcellularLocation>
    <subcellularLocation>
        <location evidence="1">Cell tip</location>
    </subcellularLocation>
</comment>
<comment type="tissue specificity">
    <text evidence="8">Expressed in conidia and during appressorium formation.</text>
</comment>
<comment type="domain">
    <text evidence="1">The N-terminal myosin motor-like domain (MMD) does not seem to have motor activity but is indispensable for polarized cell wall synthesis via binding to actin that ensures the proper localization to the hyphal tips and septation sites near actin structures.</text>
</comment>
<comment type="disruption phenotype">
    <text evidence="8">Results in cell wall fragility, shows high sensitivity to Congo red and calcofluor white and leads to increased germination (PubMed:31461507). Impairs appressorium formation, affects growth of in insecta produced hyphal bodies, and alters the surface properties of conidia and hyphal bodies, resulting in defects in the ability of the mutant strains to evade insect immune responses (PubMed:31461507).</text>
</comment>
<comment type="similarity">
    <text evidence="10">In the N-terminal section; belongs to the TRAFAC class myosin-kinesin ATPase superfamily. Myosin family.</text>
</comment>
<comment type="similarity">
    <text evidence="10">In the C-terminal section; belongs to the chitin synthase family. Class V subfamily.</text>
</comment>
<gene>
    <name evidence="9" type="primary">ChsV</name>
    <name type="ORF">MAC_08639</name>
</gene>